<dbReference type="EMBL" id="L08666">
    <property type="protein sequence ID" value="AAA60144.1"/>
    <property type="status" value="ALT_FRAME"/>
    <property type="molecule type" value="mRNA"/>
</dbReference>
<dbReference type="EMBL" id="L08666">
    <property type="protein sequence ID" value="AAA60145.1"/>
    <property type="status" value="ALT_FRAME"/>
    <property type="molecule type" value="mRNA"/>
</dbReference>
<dbReference type="EMBL" id="L06328">
    <property type="protein sequence ID" value="AAB59457.1"/>
    <property type="molecule type" value="mRNA"/>
</dbReference>
<dbReference type="EMBL" id="AF152227">
    <property type="protein sequence ID" value="AAD40241.1"/>
    <property type="molecule type" value="Genomic_DNA"/>
</dbReference>
<dbReference type="EMBL" id="AF152220">
    <property type="protein sequence ID" value="AAD40241.1"/>
    <property type="status" value="JOINED"/>
    <property type="molecule type" value="Genomic_DNA"/>
</dbReference>
<dbReference type="EMBL" id="AF152221">
    <property type="protein sequence ID" value="AAD40241.1"/>
    <property type="status" value="JOINED"/>
    <property type="molecule type" value="Genomic_DNA"/>
</dbReference>
<dbReference type="EMBL" id="AF152222">
    <property type="protein sequence ID" value="AAD40241.1"/>
    <property type="status" value="JOINED"/>
    <property type="molecule type" value="Genomic_DNA"/>
</dbReference>
<dbReference type="EMBL" id="AF152223">
    <property type="protein sequence ID" value="AAD40241.1"/>
    <property type="status" value="JOINED"/>
    <property type="molecule type" value="Genomic_DNA"/>
</dbReference>
<dbReference type="EMBL" id="AF152224">
    <property type="protein sequence ID" value="AAD40241.1"/>
    <property type="status" value="JOINED"/>
    <property type="molecule type" value="Genomic_DNA"/>
</dbReference>
<dbReference type="EMBL" id="AF152225">
    <property type="protein sequence ID" value="AAD40241.1"/>
    <property type="status" value="JOINED"/>
    <property type="molecule type" value="Genomic_DNA"/>
</dbReference>
<dbReference type="EMBL" id="AF152226">
    <property type="protein sequence ID" value="AAD40241.1"/>
    <property type="status" value="JOINED"/>
    <property type="molecule type" value="Genomic_DNA"/>
</dbReference>
<dbReference type="EMBL" id="CR456964">
    <property type="protein sequence ID" value="CAG33245.1"/>
    <property type="molecule type" value="mRNA"/>
</dbReference>
<dbReference type="EMBL" id="AL390034">
    <property type="status" value="NOT_ANNOTATED_CDS"/>
    <property type="molecule type" value="Genomic_DNA"/>
</dbReference>
<dbReference type="EMBL" id="AL392111">
    <property type="status" value="NOT_ANNOTATED_CDS"/>
    <property type="molecule type" value="Genomic_DNA"/>
</dbReference>
<dbReference type="EMBL" id="BC000165">
    <property type="protein sequence ID" value="AAH00165.2"/>
    <property type="molecule type" value="mRNA"/>
</dbReference>
<dbReference type="EMBL" id="BC012883">
    <property type="protein sequence ID" value="AAH12883.2"/>
    <property type="molecule type" value="mRNA"/>
</dbReference>
<dbReference type="EMBL" id="BC072407">
    <property type="protein sequence ID" value="AAH72407.1"/>
    <property type="molecule type" value="mRNA"/>
</dbReference>
<dbReference type="CCDS" id="CCDS53544.1">
    <molecule id="P45880-1"/>
</dbReference>
<dbReference type="CCDS" id="CCDS7348.1">
    <molecule id="P45880-3"/>
</dbReference>
<dbReference type="PIR" id="A45972">
    <property type="entry name" value="A45972"/>
</dbReference>
<dbReference type="PIR" id="B44422">
    <property type="entry name" value="B44422"/>
</dbReference>
<dbReference type="RefSeq" id="NP_001171712.1">
    <molecule id="P45880-1"/>
    <property type="nucleotide sequence ID" value="NM_001184783.3"/>
</dbReference>
<dbReference type="RefSeq" id="NP_001171752.1">
    <molecule id="P45880-3"/>
    <property type="nucleotide sequence ID" value="NM_001184823.2"/>
</dbReference>
<dbReference type="RefSeq" id="NP_001311017.1">
    <molecule id="P45880-3"/>
    <property type="nucleotide sequence ID" value="NM_001324088.2"/>
</dbReference>
<dbReference type="RefSeq" id="NP_001378892.1">
    <molecule id="P45880-3"/>
    <property type="nucleotide sequence ID" value="NM_001391963.1"/>
</dbReference>
<dbReference type="RefSeq" id="NP_003366.2">
    <molecule id="P45880-3"/>
    <property type="nucleotide sequence ID" value="NM_003375.4"/>
</dbReference>
<dbReference type="PDB" id="9EIH">
    <property type="method" value="EM"/>
    <property type="resolution" value="3.10 A"/>
    <property type="chains" value="E/F=1-294"/>
</dbReference>
<dbReference type="PDB" id="9EII">
    <property type="method" value="EM"/>
    <property type="resolution" value="2.75 A"/>
    <property type="chains" value="F=1-294"/>
</dbReference>
<dbReference type="PDB" id="9EIJ">
    <property type="method" value="EM"/>
    <property type="resolution" value="3.30 A"/>
    <property type="chains" value="E/F=1-294"/>
</dbReference>
<dbReference type="PDBsum" id="9EIH"/>
<dbReference type="PDBsum" id="9EII"/>
<dbReference type="PDBsum" id="9EIJ"/>
<dbReference type="EMDB" id="EMD-48083"/>
<dbReference type="EMDB" id="EMD-48084"/>
<dbReference type="EMDB" id="EMD-48085"/>
<dbReference type="SMR" id="P45880"/>
<dbReference type="BioGRID" id="113260">
    <property type="interactions" value="442"/>
</dbReference>
<dbReference type="CORUM" id="P45880"/>
<dbReference type="FunCoup" id="P45880">
    <property type="interactions" value="2876"/>
</dbReference>
<dbReference type="IntAct" id="P45880">
    <property type="interactions" value="164"/>
</dbReference>
<dbReference type="MINT" id="P45880"/>
<dbReference type="STRING" id="9606.ENSP00000361635"/>
<dbReference type="BindingDB" id="P45880"/>
<dbReference type="ChEMBL" id="CHEMBL6190"/>
<dbReference type="DrugBank" id="DB01375">
    <property type="generic name" value="Aluminium monostearate"/>
</dbReference>
<dbReference type="DrugBank" id="DB06098">
    <property type="generic name" value="PRLX 93936"/>
</dbReference>
<dbReference type="MoonProt" id="P45880"/>
<dbReference type="TCDB" id="1.B.8.1.12">
    <property type="family name" value="the mitochondrial and plastid porin (mpp) family"/>
</dbReference>
<dbReference type="CarbonylDB" id="P45880"/>
<dbReference type="GlyCosmos" id="P45880">
    <property type="glycosylation" value="2 sites, 1 glycan"/>
</dbReference>
<dbReference type="GlyGen" id="P45880">
    <property type="glycosylation" value="4 sites, 1 N-linked glycan (1 site), 1 O-linked glycan (3 sites)"/>
</dbReference>
<dbReference type="iPTMnet" id="P45880"/>
<dbReference type="PhosphoSitePlus" id="P45880"/>
<dbReference type="SwissPalm" id="P45880"/>
<dbReference type="BioMuta" id="VDAC2"/>
<dbReference type="DMDM" id="158518391"/>
<dbReference type="OGP" id="P45880"/>
<dbReference type="REPRODUCTION-2DPAGE" id="P45880"/>
<dbReference type="jPOST" id="P45880"/>
<dbReference type="MassIVE" id="P45880"/>
<dbReference type="PaxDb" id="9606-ENSP00000361635"/>
<dbReference type="PeptideAtlas" id="P45880"/>
<dbReference type="ProteomicsDB" id="55687">
    <molecule id="P45880-3"/>
</dbReference>
<dbReference type="ProteomicsDB" id="55688">
    <molecule id="P45880-1"/>
</dbReference>
<dbReference type="ProteomicsDB" id="55689">
    <molecule id="P45880-2"/>
</dbReference>
<dbReference type="Pumba" id="P45880"/>
<dbReference type="TopDownProteomics" id="P45880-3">
    <molecule id="P45880-3"/>
</dbReference>
<dbReference type="Antibodypedia" id="29670">
    <property type="antibodies" value="304 antibodies from 31 providers"/>
</dbReference>
<dbReference type="DNASU" id="7417"/>
<dbReference type="Ensembl" id="ENST00000313132.8">
    <molecule id="P45880-1"/>
    <property type="protein sequence ID" value="ENSP00000361635.1"/>
    <property type="gene ID" value="ENSG00000165637.14"/>
</dbReference>
<dbReference type="Ensembl" id="ENST00000332211.11">
    <molecule id="P45880-3"/>
    <property type="protein sequence ID" value="ENSP00000361686.3"/>
    <property type="gene ID" value="ENSG00000165637.14"/>
</dbReference>
<dbReference type="Ensembl" id="ENST00000543351.5">
    <molecule id="P45880-3"/>
    <property type="protein sequence ID" value="ENSP00000443092.1"/>
    <property type="gene ID" value="ENSG00000165637.14"/>
</dbReference>
<dbReference type="GeneID" id="7417"/>
<dbReference type="KEGG" id="hsa:7417"/>
<dbReference type="MANE-Select" id="ENST00000332211.11">
    <property type="protein sequence ID" value="ENSP00000361686.3"/>
    <property type="RefSeq nucleotide sequence ID" value="NM_001391963.1"/>
    <property type="RefSeq protein sequence ID" value="NP_001378892.1"/>
</dbReference>
<dbReference type="UCSC" id="uc001jwz.5">
    <molecule id="P45880-3"/>
    <property type="organism name" value="human"/>
</dbReference>
<dbReference type="AGR" id="HGNC:12672"/>
<dbReference type="CTD" id="7417"/>
<dbReference type="DisGeNET" id="7417"/>
<dbReference type="GeneCards" id="VDAC2"/>
<dbReference type="HGNC" id="HGNC:12672">
    <property type="gene designation" value="VDAC2"/>
</dbReference>
<dbReference type="HPA" id="ENSG00000165637">
    <property type="expression patterns" value="Low tissue specificity"/>
</dbReference>
<dbReference type="MIM" id="193245">
    <property type="type" value="gene"/>
</dbReference>
<dbReference type="neXtProt" id="NX_P45880"/>
<dbReference type="OpenTargets" id="ENSG00000165637"/>
<dbReference type="PharmGKB" id="PA37295"/>
<dbReference type="VEuPathDB" id="HostDB:ENSG00000165637"/>
<dbReference type="eggNOG" id="KOG3126">
    <property type="taxonomic scope" value="Eukaryota"/>
</dbReference>
<dbReference type="GeneTree" id="ENSGT00950000182869"/>
<dbReference type="HOGENOM" id="CLU_044399_2_0_1"/>
<dbReference type="InParanoid" id="P45880"/>
<dbReference type="OMA" id="FKQPAFH"/>
<dbReference type="OrthoDB" id="7827681at2759"/>
<dbReference type="PAN-GO" id="P45880">
    <property type="GO annotations" value="2 GO annotations based on evolutionary models"/>
</dbReference>
<dbReference type="PhylomeDB" id="P45880"/>
<dbReference type="TreeFam" id="TF315091"/>
<dbReference type="PathwayCommons" id="P45880"/>
<dbReference type="Reactome" id="R-HSA-5205685">
    <property type="pathway name" value="PINK1-PRKN Mediated Mitophagy"/>
</dbReference>
<dbReference type="Reactome" id="R-HSA-5689880">
    <property type="pathway name" value="Ub-specific processing proteases"/>
</dbReference>
<dbReference type="Reactome" id="R-HSA-8949215">
    <property type="pathway name" value="Mitochondrial calcium ion transport"/>
</dbReference>
<dbReference type="SignaLink" id="P45880"/>
<dbReference type="BioGRID-ORCS" id="7417">
    <property type="hits" value="144 hits in 1167 CRISPR screens"/>
</dbReference>
<dbReference type="CD-CODE" id="91857CE7">
    <property type="entry name" value="Nucleolus"/>
</dbReference>
<dbReference type="CD-CODE" id="FB4E32DD">
    <property type="entry name" value="Presynaptic clusters and postsynaptic densities"/>
</dbReference>
<dbReference type="ChiTaRS" id="VDAC2">
    <property type="organism name" value="human"/>
</dbReference>
<dbReference type="GeneWiki" id="VDAC2"/>
<dbReference type="GenomeRNAi" id="7417"/>
<dbReference type="Pharos" id="P45880">
    <property type="development level" value="Tchem"/>
</dbReference>
<dbReference type="PRO" id="PR:P45880"/>
<dbReference type="Proteomes" id="UP000005640">
    <property type="component" value="Chromosome 10"/>
</dbReference>
<dbReference type="RNAct" id="P45880">
    <property type="molecule type" value="protein"/>
</dbReference>
<dbReference type="Bgee" id="ENSG00000165637">
    <property type="expression patterns" value="Expressed in esophagus mucosa and 116 other cell types or tissues"/>
</dbReference>
<dbReference type="ExpressionAtlas" id="P45880">
    <property type="expression patterns" value="baseline and differential"/>
</dbReference>
<dbReference type="GO" id="GO:0001669">
    <property type="term" value="C:acrosomal vesicle"/>
    <property type="evidence" value="ECO:0000314"/>
    <property type="project" value="CAFA"/>
</dbReference>
<dbReference type="GO" id="GO:0016020">
    <property type="term" value="C:membrane"/>
    <property type="evidence" value="ECO:0000314"/>
    <property type="project" value="UniProtKB"/>
</dbReference>
<dbReference type="GO" id="GO:0045121">
    <property type="term" value="C:membrane raft"/>
    <property type="evidence" value="ECO:0000314"/>
    <property type="project" value="UniProtKB"/>
</dbReference>
<dbReference type="GO" id="GO:0031966">
    <property type="term" value="C:mitochondrial membrane"/>
    <property type="evidence" value="ECO:0000314"/>
    <property type="project" value="UniProtKB"/>
</dbReference>
<dbReference type="GO" id="GO:0042645">
    <property type="term" value="C:mitochondrial nucleoid"/>
    <property type="evidence" value="ECO:0000314"/>
    <property type="project" value="BHF-UCL"/>
</dbReference>
<dbReference type="GO" id="GO:0005741">
    <property type="term" value="C:mitochondrial outer membrane"/>
    <property type="evidence" value="ECO:0000314"/>
    <property type="project" value="UniProtKB"/>
</dbReference>
<dbReference type="GO" id="GO:0005739">
    <property type="term" value="C:mitochondrion"/>
    <property type="evidence" value="ECO:0000314"/>
    <property type="project" value="HPA"/>
</dbReference>
<dbReference type="GO" id="GO:0005634">
    <property type="term" value="C:nucleus"/>
    <property type="evidence" value="ECO:0007005"/>
    <property type="project" value="UniProtKB"/>
</dbReference>
<dbReference type="GO" id="GO:0046930">
    <property type="term" value="C:pore complex"/>
    <property type="evidence" value="ECO:0007669"/>
    <property type="project" value="UniProtKB-KW"/>
</dbReference>
<dbReference type="GO" id="GO:0097225">
    <property type="term" value="C:sperm midpiece"/>
    <property type="evidence" value="ECO:0000250"/>
    <property type="project" value="UniProtKB"/>
</dbReference>
<dbReference type="GO" id="GO:0005524">
    <property type="term" value="F:ATP binding"/>
    <property type="evidence" value="ECO:0007669"/>
    <property type="project" value="UniProtKB-KW"/>
</dbReference>
<dbReference type="GO" id="GO:0097001">
    <property type="term" value="F:ceramide binding"/>
    <property type="evidence" value="ECO:0000314"/>
    <property type="project" value="UniProtKB"/>
</dbReference>
<dbReference type="GO" id="GO:0015485">
    <property type="term" value="F:cholesterol binding"/>
    <property type="evidence" value="ECO:0000314"/>
    <property type="project" value="UniProtKB"/>
</dbReference>
<dbReference type="GO" id="GO:0008142">
    <property type="term" value="F:oxysterol binding"/>
    <property type="evidence" value="ECO:0000250"/>
    <property type="project" value="UniProtKB"/>
</dbReference>
<dbReference type="GO" id="GO:0031210">
    <property type="term" value="F:phosphatidylcholine binding"/>
    <property type="evidence" value="ECO:0000314"/>
    <property type="project" value="UniProtKB"/>
</dbReference>
<dbReference type="GO" id="GO:0017128">
    <property type="term" value="F:phospholipid scramblase activity"/>
    <property type="evidence" value="ECO:0000314"/>
    <property type="project" value="UniProtKB"/>
</dbReference>
<dbReference type="GO" id="GO:0015288">
    <property type="term" value="F:porin activity"/>
    <property type="evidence" value="ECO:0007669"/>
    <property type="project" value="UniProtKB-KW"/>
</dbReference>
<dbReference type="GO" id="GO:0008308">
    <property type="term" value="F:voltage-gated monoatomic anion channel activity"/>
    <property type="evidence" value="ECO:0000314"/>
    <property type="project" value="UniProtKB"/>
</dbReference>
<dbReference type="GO" id="GO:0005244">
    <property type="term" value="F:voltage-gated monoatomic ion channel activity"/>
    <property type="evidence" value="ECO:0000314"/>
    <property type="project" value="UniProtKB"/>
</dbReference>
<dbReference type="GO" id="GO:0007339">
    <property type="term" value="P:binding of sperm to zona pellucida"/>
    <property type="evidence" value="ECO:0000315"/>
    <property type="project" value="CAFA"/>
</dbReference>
<dbReference type="GO" id="GO:0097345">
    <property type="term" value="P:mitochondrial outer membrane permeabilization"/>
    <property type="evidence" value="ECO:0000315"/>
    <property type="project" value="UniProtKB"/>
</dbReference>
<dbReference type="GO" id="GO:1990542">
    <property type="term" value="P:mitochondrial transmembrane transport"/>
    <property type="evidence" value="ECO:0000314"/>
    <property type="project" value="UniProtKB"/>
</dbReference>
<dbReference type="GO" id="GO:0006820">
    <property type="term" value="P:monoatomic anion transport"/>
    <property type="evidence" value="ECO:0000314"/>
    <property type="project" value="UniProtKB"/>
</dbReference>
<dbReference type="GO" id="GO:0045332">
    <property type="term" value="P:phospholipid translocation"/>
    <property type="evidence" value="ECO:0000314"/>
    <property type="project" value="UniProtKB"/>
</dbReference>
<dbReference type="CDD" id="cd07306">
    <property type="entry name" value="Porin3_VDAC"/>
    <property type="match status" value="1"/>
</dbReference>
<dbReference type="FunFam" id="2.40.160.10:FF:000001">
    <property type="entry name" value="Voltage-dependent anion-selective channel protein 2"/>
    <property type="match status" value="1"/>
</dbReference>
<dbReference type="Gene3D" id="2.40.160.10">
    <property type="entry name" value="Porin"/>
    <property type="match status" value="1"/>
</dbReference>
<dbReference type="InterPro" id="IPR023614">
    <property type="entry name" value="Porin_dom_sf"/>
</dbReference>
<dbReference type="InterPro" id="IPR001925">
    <property type="entry name" value="Porin_Euk"/>
</dbReference>
<dbReference type="InterPro" id="IPR027246">
    <property type="entry name" value="Porin_Euk/Tom40"/>
</dbReference>
<dbReference type="PANTHER" id="PTHR11743">
    <property type="entry name" value="VOLTAGE-DEPENDENT ANION-SELECTIVE CHANNEL"/>
    <property type="match status" value="1"/>
</dbReference>
<dbReference type="PANTHER" id="PTHR11743:SF12">
    <property type="entry name" value="VOLTAGE-DEPENDENT ANION-SELECTIVE CHANNEL PROTEIN 2"/>
    <property type="match status" value="1"/>
</dbReference>
<dbReference type="Pfam" id="PF01459">
    <property type="entry name" value="Porin_3"/>
    <property type="match status" value="1"/>
</dbReference>
<dbReference type="PRINTS" id="PR00185">
    <property type="entry name" value="EUKARYTPORIN"/>
</dbReference>
<dbReference type="PROSITE" id="PS00558">
    <property type="entry name" value="EUKARYOTIC_PORIN"/>
    <property type="match status" value="1"/>
</dbReference>
<accession>P45880</accession>
<accession>Q5VWK1</accession>
<accession>Q5VWK3</accession>
<accession>Q6IB40</accession>
<accession>Q7L3J5</accession>
<accession>Q9BWK8</accession>
<accession>Q9Y5I6</accession>
<evidence type="ECO:0000250" key="1">
    <source>
        <dbReference type="UniProtKB" id="P21796"/>
    </source>
</evidence>
<evidence type="ECO:0000250" key="2">
    <source>
        <dbReference type="UniProtKB" id="Q60930"/>
    </source>
</evidence>
<evidence type="ECO:0000250" key="3">
    <source>
        <dbReference type="UniProtKB" id="Q60932"/>
    </source>
</evidence>
<evidence type="ECO:0000269" key="4">
    <source>
    </source>
</evidence>
<evidence type="ECO:0000269" key="5">
    <source>
    </source>
</evidence>
<evidence type="ECO:0000269" key="6">
    <source>
    </source>
</evidence>
<evidence type="ECO:0000269" key="7">
    <source>
    </source>
</evidence>
<evidence type="ECO:0000269" key="8">
    <source>
    </source>
</evidence>
<evidence type="ECO:0000269" key="9">
    <source>
    </source>
</evidence>
<evidence type="ECO:0000303" key="10">
    <source>
    </source>
</evidence>
<evidence type="ECO:0000303" key="11">
    <source>
    </source>
</evidence>
<evidence type="ECO:0000303" key="12">
    <source ref="4"/>
</evidence>
<evidence type="ECO:0000305" key="13"/>
<evidence type="ECO:0000305" key="14">
    <source>
    </source>
</evidence>
<evidence type="ECO:0000312" key="15">
    <source>
        <dbReference type="HGNC" id="HGNC:12672"/>
    </source>
</evidence>
<evidence type="ECO:0007744" key="16">
    <source>
    </source>
</evidence>
<evidence type="ECO:0007744" key="17">
    <source>
    </source>
</evidence>
<evidence type="ECO:0007744" key="18">
    <source>
    </source>
</evidence>
<reference key="1">
    <citation type="journal article" date="1993" name="J. Biol. Chem.">
        <title>A mitochondrial porin cDNA predicts the existence of multiple human porins.</title>
        <authorList>
            <person name="Ha H."/>
            <person name="Hajek P."/>
            <person name="Bedwell D.M."/>
            <person name="Burrows P.D."/>
        </authorList>
    </citation>
    <scope>NUCLEOTIDE SEQUENCE [MRNA] (ISOFORMS 1 AND 2)</scope>
    <source>
        <tissue>B-cell</tissue>
    </source>
</reference>
<reference key="2">
    <citation type="journal article" date="1993" name="J. Biol. Chem.">
        <title>Cloning and functional expression in yeast of two human isoforms of the outer mitochondrial membrane channel, the voltage-dependent anion channel.</title>
        <authorList>
            <person name="Blachly-Dyson E."/>
            <person name="Zambronicz E.B."/>
            <person name="Yu W.H."/>
            <person name="Adams V."/>
            <person name="McCabe E.R."/>
            <person name="Adelman J.P."/>
            <person name="Colombini M."/>
            <person name="Forte M.A."/>
        </authorList>
    </citation>
    <scope>NUCLEOTIDE SEQUENCE [MRNA] (ISOFORM 3)</scope>
    <scope>FUNCTION</scope>
    <scope>TRANSPORTER ACTIVITY</scope>
    <scope>TISSUE SPECIFICITY</scope>
    <scope>VARIANT VAL-24</scope>
    <source>
        <tissue>Liver</tissue>
    </source>
</reference>
<reference key="3">
    <citation type="journal article" date="1999" name="Mamm. Genome">
        <title>Revised fine mapping of the human voltage-dependent anion channel loci by radiation hybrid analysis.</title>
        <authorList>
            <person name="Decker W.K."/>
            <person name="Bowles K.R."/>
            <person name="Schatte E.C."/>
            <person name="Towbin J.A."/>
            <person name="Craigen W.J."/>
        </authorList>
    </citation>
    <scope>NUCLEOTIDE SEQUENCE [GENOMIC DNA] (ISOFORM 3)</scope>
</reference>
<reference key="4">
    <citation type="submission" date="2004-06" db="EMBL/GenBank/DDBJ databases">
        <title>Cloning of human full open reading frames in Gateway(TM) system entry vector (pDONR201).</title>
        <authorList>
            <person name="Ebert L."/>
            <person name="Schick M."/>
            <person name="Neubert P."/>
            <person name="Schatten R."/>
            <person name="Henze S."/>
            <person name="Korn B."/>
        </authorList>
    </citation>
    <scope>NUCLEOTIDE SEQUENCE [LARGE SCALE MRNA] (ISOFORM 2)</scope>
</reference>
<reference key="5">
    <citation type="journal article" date="2004" name="Nature">
        <title>The DNA sequence and comparative analysis of human chromosome 10.</title>
        <authorList>
            <person name="Deloukas P."/>
            <person name="Earthrowl M.E."/>
            <person name="Grafham D.V."/>
            <person name="Rubenfield M."/>
            <person name="French L."/>
            <person name="Steward C.A."/>
            <person name="Sims S.K."/>
            <person name="Jones M.C."/>
            <person name="Searle S."/>
            <person name="Scott C."/>
            <person name="Howe K."/>
            <person name="Hunt S.E."/>
            <person name="Andrews T.D."/>
            <person name="Gilbert J.G.R."/>
            <person name="Swarbreck D."/>
            <person name="Ashurst J.L."/>
            <person name="Taylor A."/>
            <person name="Battles J."/>
            <person name="Bird C.P."/>
            <person name="Ainscough R."/>
            <person name="Almeida J.P."/>
            <person name="Ashwell R.I.S."/>
            <person name="Ambrose K.D."/>
            <person name="Babbage A.K."/>
            <person name="Bagguley C.L."/>
            <person name="Bailey J."/>
            <person name="Banerjee R."/>
            <person name="Bates K."/>
            <person name="Beasley H."/>
            <person name="Bray-Allen S."/>
            <person name="Brown A.J."/>
            <person name="Brown J.Y."/>
            <person name="Burford D.C."/>
            <person name="Burrill W."/>
            <person name="Burton J."/>
            <person name="Cahill P."/>
            <person name="Camire D."/>
            <person name="Carter N.P."/>
            <person name="Chapman J.C."/>
            <person name="Clark S.Y."/>
            <person name="Clarke G."/>
            <person name="Clee C.M."/>
            <person name="Clegg S."/>
            <person name="Corby N."/>
            <person name="Coulson A."/>
            <person name="Dhami P."/>
            <person name="Dutta I."/>
            <person name="Dunn M."/>
            <person name="Faulkner L."/>
            <person name="Frankish A."/>
            <person name="Frankland J.A."/>
            <person name="Garner P."/>
            <person name="Garnett J."/>
            <person name="Gribble S."/>
            <person name="Griffiths C."/>
            <person name="Grocock R."/>
            <person name="Gustafson E."/>
            <person name="Hammond S."/>
            <person name="Harley J.L."/>
            <person name="Hart E."/>
            <person name="Heath P.D."/>
            <person name="Ho T.P."/>
            <person name="Hopkins B."/>
            <person name="Horne J."/>
            <person name="Howden P.J."/>
            <person name="Huckle E."/>
            <person name="Hynds C."/>
            <person name="Johnson C."/>
            <person name="Johnson D."/>
            <person name="Kana A."/>
            <person name="Kay M."/>
            <person name="Kimberley A.M."/>
            <person name="Kershaw J.K."/>
            <person name="Kokkinaki M."/>
            <person name="Laird G.K."/>
            <person name="Lawlor S."/>
            <person name="Lee H.M."/>
            <person name="Leongamornlert D.A."/>
            <person name="Laird G."/>
            <person name="Lloyd C."/>
            <person name="Lloyd D.M."/>
            <person name="Loveland J."/>
            <person name="Lovell J."/>
            <person name="McLaren S."/>
            <person name="McLay K.E."/>
            <person name="McMurray A."/>
            <person name="Mashreghi-Mohammadi M."/>
            <person name="Matthews L."/>
            <person name="Milne S."/>
            <person name="Nickerson T."/>
            <person name="Nguyen M."/>
            <person name="Overton-Larty E."/>
            <person name="Palmer S.A."/>
            <person name="Pearce A.V."/>
            <person name="Peck A.I."/>
            <person name="Pelan S."/>
            <person name="Phillimore B."/>
            <person name="Porter K."/>
            <person name="Rice C.M."/>
            <person name="Rogosin A."/>
            <person name="Ross M.T."/>
            <person name="Sarafidou T."/>
            <person name="Sehra H.K."/>
            <person name="Shownkeen R."/>
            <person name="Skuce C.D."/>
            <person name="Smith M."/>
            <person name="Standring L."/>
            <person name="Sycamore N."/>
            <person name="Tester J."/>
            <person name="Thorpe A."/>
            <person name="Torcasso W."/>
            <person name="Tracey A."/>
            <person name="Tromans A."/>
            <person name="Tsolas J."/>
            <person name="Wall M."/>
            <person name="Walsh J."/>
            <person name="Wang H."/>
            <person name="Weinstock K."/>
            <person name="West A.P."/>
            <person name="Willey D.L."/>
            <person name="Whitehead S.L."/>
            <person name="Wilming L."/>
            <person name="Wray P.W."/>
            <person name="Young L."/>
            <person name="Chen Y."/>
            <person name="Lovering R.C."/>
            <person name="Moschonas N.K."/>
            <person name="Siebert R."/>
            <person name="Fechtel K."/>
            <person name="Bentley D."/>
            <person name="Durbin R.M."/>
            <person name="Hubbard T."/>
            <person name="Doucette-Stamm L."/>
            <person name="Beck S."/>
            <person name="Smith D.R."/>
            <person name="Rogers J."/>
        </authorList>
    </citation>
    <scope>NUCLEOTIDE SEQUENCE [LARGE SCALE GENOMIC DNA]</scope>
</reference>
<reference key="6">
    <citation type="journal article" date="2004" name="Genome Res.">
        <title>The status, quality, and expansion of the NIH full-length cDNA project: the Mammalian Gene Collection (MGC).</title>
        <authorList>
            <consortium name="The MGC Project Team"/>
        </authorList>
    </citation>
    <scope>NUCLEOTIDE SEQUENCE [LARGE SCALE MRNA] (ISOFORM 3)</scope>
    <source>
        <tissue>Cervix</tissue>
        <tissue>Eye</tissue>
    </source>
</reference>
<reference key="7">
    <citation type="submission" date="2008-12" db="UniProtKB">
        <authorList>
            <person name="Lubec G."/>
            <person name="Vishwanath V."/>
            <person name="Chen W.-Q."/>
            <person name="Sun Y."/>
        </authorList>
    </citation>
    <scope>PROTEIN SEQUENCE OF 86-120; 178-229 AND 248-267</scope>
    <scope>IDENTIFICATION BY MASS SPECTROMETRY</scope>
    <source>
        <tissue>Brain</tissue>
        <tissue>Cajal-Retzius cell</tissue>
        <tissue>Fetal brain cortex</tissue>
    </source>
</reference>
<reference key="8">
    <citation type="submission" date="2005-06" db="UniProtKB">
        <authorList>
            <person name="Bienvenut W.V."/>
        </authorList>
    </citation>
    <scope>PROTEIN SEQUENCE OF 11-23 (ISOFORM 3)</scope>
    <scope>PROTEIN SEQUENCE OF 46-64; 75-85; 108-120; 178-185; 236-263 AND 268-277 (ISOFORMS 1/2/3)</scope>
    <scope>IDENTIFICATION BY MASS SPECTROMETRY</scope>
    <source>
        <tissue>B-cell lymphoma</tissue>
    </source>
</reference>
<reference key="9">
    <citation type="journal article" date="1995" name="J. Biol. Chem.">
        <title>Subcellular localization of human voltage-dependent anion channel isoforms.</title>
        <authorList>
            <person name="Yu W.H."/>
            <person name="Wolfgang W."/>
            <person name="Forte M.A."/>
        </authorList>
    </citation>
    <scope>SUBCELLULAR LOCATION</scope>
</reference>
<reference key="10">
    <citation type="journal article" date="2006" name="Cell">
        <title>Global, in vivo, and site-specific phosphorylation dynamics in signaling networks.</title>
        <authorList>
            <person name="Olsen J.V."/>
            <person name="Blagoev B."/>
            <person name="Gnad F."/>
            <person name="Macek B."/>
            <person name="Kumar C."/>
            <person name="Mortensen P."/>
            <person name="Mann M."/>
        </authorList>
    </citation>
    <scope>IDENTIFICATION BY MASS SPECTROMETRY [LARGE SCALE ANALYSIS]</scope>
    <source>
        <tissue>Cervix carcinoma</tissue>
    </source>
</reference>
<reference key="11">
    <citation type="journal article" date="2008" name="J. Proteome Res.">
        <title>Phosphoproteome of resting human platelets.</title>
        <authorList>
            <person name="Zahedi R.P."/>
            <person name="Lewandrowski U."/>
            <person name="Wiesner J."/>
            <person name="Wortelkamp S."/>
            <person name="Moebius J."/>
            <person name="Schuetz C."/>
            <person name="Walter U."/>
            <person name="Gambaryan S."/>
            <person name="Sickmann A."/>
        </authorList>
    </citation>
    <scope>IDENTIFICATION BY MASS SPECTROMETRY [LARGE SCALE ANALYSIS]</scope>
    <source>
        <tissue>Platelet</tissue>
    </source>
</reference>
<reference key="12">
    <citation type="journal article" date="2008" name="Mol. Cell">
        <title>Kinase-selective enrichment enables quantitative phosphoproteomics of the kinome across the cell cycle.</title>
        <authorList>
            <person name="Daub H."/>
            <person name="Olsen J.V."/>
            <person name="Bairlein M."/>
            <person name="Gnad F."/>
            <person name="Oppermann F.S."/>
            <person name="Korner R."/>
            <person name="Greff Z."/>
            <person name="Keri G."/>
            <person name="Stemmann O."/>
            <person name="Mann M."/>
        </authorList>
    </citation>
    <scope>IDENTIFICATION BY MASS SPECTROMETRY [LARGE SCALE ANALYSIS]</scope>
    <source>
        <tissue>Cervix carcinoma</tissue>
    </source>
</reference>
<reference key="13">
    <citation type="journal article" date="2008" name="Proc. Natl. Acad. Sci. U.S.A.">
        <title>A quantitative atlas of mitotic phosphorylation.</title>
        <authorList>
            <person name="Dephoure N."/>
            <person name="Zhou C."/>
            <person name="Villen J."/>
            <person name="Beausoleil S.A."/>
            <person name="Bakalarski C.E."/>
            <person name="Elledge S.J."/>
            <person name="Gygi S.P."/>
        </authorList>
    </citation>
    <scope>IDENTIFICATION BY MASS SPECTROMETRY [LARGE SCALE ANALYSIS]</scope>
    <source>
        <tissue>Cervix carcinoma</tissue>
    </source>
</reference>
<reference key="14">
    <citation type="journal article" date="2009" name="Anal. Chem.">
        <title>Lys-N and trypsin cover complementary parts of the phosphoproteome in a refined SCX-based approach.</title>
        <authorList>
            <person name="Gauci S."/>
            <person name="Helbig A.O."/>
            <person name="Slijper M."/>
            <person name="Krijgsveld J."/>
            <person name="Heck A.J."/>
            <person name="Mohammed S."/>
        </authorList>
    </citation>
    <scope>ACETYLATION [LARGE SCALE ANALYSIS] AT ALA-2</scope>
    <scope>CLEAVAGE OF INITIATOR METHIONINE [LARGE SCALE ANALYSIS]</scope>
    <scope>IDENTIFICATION BY MASS SPECTROMETRY [LARGE SCALE ANALYSIS]</scope>
</reference>
<reference key="15">
    <citation type="journal article" date="2009" name="Science">
        <title>Lysine acetylation targets protein complexes and co-regulates major cellular functions.</title>
        <authorList>
            <person name="Choudhary C."/>
            <person name="Kumar C."/>
            <person name="Gnad F."/>
            <person name="Nielsen M.L."/>
            <person name="Rehman M."/>
            <person name="Walther T.C."/>
            <person name="Olsen J.V."/>
            <person name="Mann M."/>
        </authorList>
    </citation>
    <scope>ACETYLATION [LARGE SCALE ANALYSIS] AT LYS-31</scope>
    <scope>IDENTIFICATION BY MASS SPECTROMETRY [LARGE SCALE ANALYSIS]</scope>
</reference>
<reference key="16">
    <citation type="journal article" date="2010" name="Sci. Signal.">
        <title>Quantitative phosphoproteomics reveals widespread full phosphorylation site occupancy during mitosis.</title>
        <authorList>
            <person name="Olsen J.V."/>
            <person name="Vermeulen M."/>
            <person name="Santamaria A."/>
            <person name="Kumar C."/>
            <person name="Miller M.L."/>
            <person name="Jensen L.J."/>
            <person name="Gnad F."/>
            <person name="Cox J."/>
            <person name="Jensen T.S."/>
            <person name="Nigg E.A."/>
            <person name="Brunak S."/>
            <person name="Mann M."/>
        </authorList>
    </citation>
    <scope>IDENTIFICATION BY MASS SPECTROMETRY [LARGE SCALE ANALYSIS]</scope>
    <source>
        <tissue>Cervix carcinoma</tissue>
    </source>
</reference>
<reference key="17">
    <citation type="journal article" date="2011" name="BMC Syst. Biol.">
        <title>Initial characterization of the human central proteome.</title>
        <authorList>
            <person name="Burkard T.R."/>
            <person name="Planyavsky M."/>
            <person name="Kaupe I."/>
            <person name="Breitwieser F.P."/>
            <person name="Buerckstuemmer T."/>
            <person name="Bennett K.L."/>
            <person name="Superti-Furga G."/>
            <person name="Colinge J."/>
        </authorList>
    </citation>
    <scope>IDENTIFICATION BY MASS SPECTROMETRY [LARGE SCALE ANALYSIS]</scope>
</reference>
<reference key="18">
    <citation type="journal article" date="2011" name="Sci. Signal.">
        <title>System-wide temporal characterization of the proteome and phosphoproteome of human embryonic stem cell differentiation.</title>
        <authorList>
            <person name="Rigbolt K.T."/>
            <person name="Prokhorova T.A."/>
            <person name="Akimov V."/>
            <person name="Henningsen J."/>
            <person name="Johansen P.T."/>
            <person name="Kratchmarova I."/>
            <person name="Kassem M."/>
            <person name="Mann M."/>
            <person name="Olsen J.V."/>
            <person name="Blagoev B."/>
        </authorList>
    </citation>
    <scope>IDENTIFICATION BY MASS SPECTROMETRY [LARGE SCALE ANALYSIS]</scope>
</reference>
<reference key="19">
    <citation type="journal article" date="2013" name="J. Proteome Res.">
        <title>Toward a comprehensive characterization of a human cancer cell phosphoproteome.</title>
        <authorList>
            <person name="Zhou H."/>
            <person name="Di Palma S."/>
            <person name="Preisinger C."/>
            <person name="Peng M."/>
            <person name="Polat A.N."/>
            <person name="Heck A.J."/>
            <person name="Mohammed S."/>
        </authorList>
    </citation>
    <scope>IDENTIFICATION BY MASS SPECTROMETRY [LARGE SCALE ANALYSIS]</scope>
    <source>
        <tissue>Cervix carcinoma</tissue>
        <tissue>Erythroleukemia</tissue>
    </source>
</reference>
<reference key="20">
    <citation type="journal article" date="2014" name="J. Proteomics">
        <title>An enzyme assisted RP-RPLC approach for in-depth analysis of human liver phosphoproteome.</title>
        <authorList>
            <person name="Bian Y."/>
            <person name="Song C."/>
            <person name="Cheng K."/>
            <person name="Dong M."/>
            <person name="Wang F."/>
            <person name="Huang J."/>
            <person name="Sun D."/>
            <person name="Wang L."/>
            <person name="Ye M."/>
            <person name="Zou H."/>
        </authorList>
    </citation>
    <scope>IDENTIFICATION BY MASS SPECTROMETRY [LARGE SCALE ANALYSIS]</scope>
    <source>
        <tissue>Liver</tissue>
    </source>
</reference>
<reference key="21">
    <citation type="journal article" date="2015" name="Nat. Cell Biol.">
        <title>USP30 and parkin homeostatically regulate atypical ubiquitin chains on mitochondria.</title>
        <authorList>
            <person name="Cunningham C.N."/>
            <person name="Baughman J.M."/>
            <person name="Phu L."/>
            <person name="Tea J.S."/>
            <person name="Yu C."/>
            <person name="Coons M."/>
            <person name="Kirkpatrick D.S."/>
            <person name="Bingol B."/>
            <person name="Corn J.E."/>
        </authorList>
    </citation>
    <scope>UBIQUITINATION AT LYS-31; LYS-64; LYS-72; LYS-120; LYS-121; LYS-124; LYS-277 AND LYS-285</scope>
</reference>
<reference key="22">
    <citation type="journal article" date="2015" name="Proteomics">
        <title>N-terminome analysis of the human mitochondrial proteome.</title>
        <authorList>
            <person name="Vaca Jacome A.S."/>
            <person name="Rabilloud T."/>
            <person name="Schaeffer-Reiss C."/>
            <person name="Rompais M."/>
            <person name="Ayoub D."/>
            <person name="Lane L."/>
            <person name="Bairoch A."/>
            <person name="Van Dorsselaer A."/>
            <person name="Carapito C."/>
        </authorList>
    </citation>
    <scope>ACETYLATION [LARGE SCALE ANALYSIS] AT ALA-2</scope>
    <scope>CLEAVAGE OF INITIATOR METHIONINE [LARGE SCALE ANALYSIS]</scope>
    <scope>IDENTIFICATION BY MASS SPECTROMETRY [LARGE SCALE ANALYSIS]</scope>
</reference>
<reference key="23">
    <citation type="journal article" date="2016" name="Sci. Rep.">
        <title>TSPO ligands stimulate ZnPPIX transport and ROS accumulation leading to the inhibition of P. falciparum growth in human blood.</title>
        <authorList>
            <person name="Marginedas-Freixa I."/>
            <person name="Hattab C."/>
            <person name="Bouyer G."/>
            <person name="Halle F."/>
            <person name="Chene A."/>
            <person name="Lefevre S.D."/>
            <person name="Cambot M."/>
            <person name="Cueff A."/>
            <person name="Schmitt M."/>
            <person name="Gamain B."/>
            <person name="Lacapere J.J."/>
            <person name="Egee S."/>
            <person name="Bihel F."/>
            <person name="Le Van Kim C."/>
            <person name="Ostuni M.A."/>
        </authorList>
    </citation>
    <scope>SUBCELLULAR LOCATION</scope>
    <scope>TISSUE SPECIFICITY</scope>
    <scope>IDENTIFICATION BY MASS SPECTROMETRY</scope>
</reference>
<reference key="24">
    <citation type="journal article" date="2019" name="Nat. Commun.">
        <title>Ceramides bind VDAC2 to trigger mitochondrial apoptosis.</title>
        <authorList>
            <person name="Dadsena S."/>
            <person name="Bockelmann S."/>
            <person name="Mina J.G.M."/>
            <person name="Hassan D.G."/>
            <person name="Korneev S."/>
            <person name="Razzera G."/>
            <person name="Jahn H."/>
            <person name="Niekamp P."/>
            <person name="Mueller D."/>
            <person name="Schneider M."/>
            <person name="Tafesse F.G."/>
            <person name="Marrink S.J."/>
            <person name="Melo M.N."/>
            <person name="Holthuis J.C.M."/>
        </authorList>
    </citation>
    <scope>FUNCTION</scope>
    <scope>SUBCELLULAR LOCATION</scope>
    <scope>IDENTIFICATION BY MASS SPECTROMETRY</scope>
    <scope>MUTAGENESIS OF GLU-84</scope>
</reference>
<reference key="25">
    <citation type="journal article" date="2023" name="Nat. Commun.">
        <title>Phospholipids are imported into mitochondria by VDAC, a dimeric beta barrel scramblase.</title>
        <authorList>
            <person name="Jahn H."/>
            <person name="Bartos L."/>
            <person name="Dearden G.I."/>
            <person name="Dittman J.S."/>
            <person name="Holthuis J.C.M."/>
            <person name="Vacha R."/>
            <person name="Menon A.K."/>
        </authorList>
    </citation>
    <scope>FUNCTION</scope>
    <scope>TRANSPORTER ACTIVITY</scope>
    <scope>SUBUNIT</scope>
</reference>
<feature type="initiator methionine" description="Removed" evidence="16 18">
    <location>
        <position position="1"/>
    </location>
</feature>
<feature type="chain" id="PRO_0000050505" description="Non-selective voltage-gated ion channel VDAC2">
    <location>
        <begin position="2"/>
        <end position="294"/>
    </location>
</feature>
<feature type="transmembrane region" description="Beta stranded" evidence="1">
    <location>
        <begin position="37"/>
        <end position="46"/>
    </location>
</feature>
<feature type="transmembrane region" description="Beta stranded" evidence="1">
    <location>
        <begin position="50"/>
        <end position="58"/>
    </location>
</feature>
<feature type="transmembrane region" description="Beta stranded" evidence="1">
    <location>
        <begin position="65"/>
        <end position="75"/>
    </location>
</feature>
<feature type="transmembrane region" description="Beta stranded" evidence="1">
    <location>
        <begin position="80"/>
        <end position="87"/>
    </location>
</feature>
<feature type="transmembrane region" description="Beta stranded" evidence="1">
    <location>
        <begin position="91"/>
        <end position="100"/>
    </location>
</feature>
<feature type="transmembrane region" description="Beta stranded" evidence="1">
    <location>
        <begin position="106"/>
        <end position="115"/>
    </location>
</feature>
<feature type="transmembrane region" description="Beta stranded" evidence="1">
    <location>
        <begin position="122"/>
        <end position="131"/>
    </location>
</feature>
<feature type="transmembrane region" description="Beta stranded" evidence="1">
    <location>
        <begin position="134"/>
        <end position="141"/>
    </location>
</feature>
<feature type="transmembrane region" description="Beta stranded" evidence="1">
    <location>
        <begin position="148"/>
        <end position="156"/>
    </location>
</feature>
<feature type="transmembrane region" description="Beta stranded" evidence="1">
    <location>
        <begin position="161"/>
        <end position="169"/>
    </location>
</feature>
<feature type="transmembrane region" description="Beta stranded" evidence="1">
    <location>
        <begin position="174"/>
        <end position="186"/>
    </location>
</feature>
<feature type="transmembrane region" description="Beta stranded" evidence="1">
    <location>
        <begin position="189"/>
        <end position="196"/>
    </location>
</feature>
<feature type="transmembrane region" description="Beta stranded" evidence="1">
    <location>
        <begin position="200"/>
        <end position="209"/>
    </location>
</feature>
<feature type="transmembrane region" description="Beta stranded" evidence="1">
    <location>
        <begin position="213"/>
        <end position="222"/>
    </location>
</feature>
<feature type="transmembrane region" description="Beta stranded" evidence="1">
    <location>
        <begin position="229"/>
        <end position="238"/>
    </location>
</feature>
<feature type="transmembrane region" description="Beta stranded" evidence="1">
    <location>
        <begin position="242"/>
        <end position="249"/>
    </location>
</feature>
<feature type="transmembrane region" description="Beta stranded" evidence="1">
    <location>
        <begin position="253"/>
        <end position="262"/>
    </location>
</feature>
<feature type="transmembrane region" description="Beta stranded" evidence="1">
    <location>
        <begin position="265"/>
        <end position="274"/>
    </location>
</feature>
<feature type="transmembrane region" description="Beta stranded" evidence="1">
    <location>
        <begin position="284"/>
        <end position="293"/>
    </location>
</feature>
<feature type="binding site" evidence="3">
    <location>
        <position position="23"/>
    </location>
    <ligand>
        <name>ATP</name>
        <dbReference type="ChEBI" id="CHEBI:30616"/>
    </ligand>
</feature>
<feature type="binding site" evidence="3">
    <location>
        <position position="31"/>
    </location>
    <ligand>
        <name>ATP</name>
        <dbReference type="ChEBI" id="CHEBI:30616"/>
    </ligand>
</feature>
<feature type="binding site" evidence="1">
    <location>
        <begin position="253"/>
        <end position="255"/>
    </location>
    <ligand>
        <name>NAD(+)</name>
        <dbReference type="ChEBI" id="CHEBI:57540"/>
    </ligand>
</feature>
<feature type="binding site" evidence="1">
    <location>
        <begin position="271"/>
        <end position="275"/>
    </location>
    <ligand>
        <name>NAD(+)</name>
        <dbReference type="ChEBI" id="CHEBI:57540"/>
    </ligand>
</feature>
<feature type="site" description="Involved in ceramide and phosphatidylcholine binding" evidence="6">
    <location>
        <position position="84"/>
    </location>
</feature>
<feature type="modified residue" description="N-acetylalanine" evidence="16 18">
    <location>
        <position position="2"/>
    </location>
</feature>
<feature type="modified residue" description="N6-acetyllysine; alternate" evidence="17">
    <location>
        <position position="31"/>
    </location>
</feature>
<feature type="modified residue" description="N6-succinyllysine; alternate" evidence="2">
    <location>
        <position position="31"/>
    </location>
</feature>
<feature type="modified residue" description="Phosphotyrosine" evidence="3">
    <location>
        <position position="78"/>
    </location>
</feature>
<feature type="modified residue" description="Phosphothreonine" evidence="1">
    <location>
        <position position="118"/>
    </location>
</feature>
<feature type="modified residue" description="N6-acetyllysine; alternate" evidence="2">
    <location>
        <position position="120"/>
    </location>
</feature>
<feature type="modified residue" description="Phosphoserine" evidence="1">
    <location>
        <position position="251"/>
    </location>
</feature>
<feature type="modified residue" description="N6-acetyllysine; alternate" evidence="1">
    <location>
        <position position="277"/>
    </location>
</feature>
<feature type="cross-link" description="Glycyl lysine isopeptide (Lys-Gly) (interchain with G-Cter in ubiquitin); alternate" evidence="4">
    <location>
        <position position="31"/>
    </location>
</feature>
<feature type="cross-link" description="Glycyl lysine isopeptide (Lys-Gly) (interchain with G-Cter in ubiquitin)" evidence="4">
    <location>
        <position position="64"/>
    </location>
</feature>
<feature type="cross-link" description="Glycyl lysine isopeptide (Lys-Gly) (interchain with G-Cter in ubiquitin)" evidence="4">
    <location>
        <position position="72"/>
    </location>
</feature>
<feature type="cross-link" description="Glycyl lysine isopeptide (Lys-Gly) (interchain with G-Cter in ubiquitin); alternate" evidence="4">
    <location>
        <position position="120"/>
    </location>
</feature>
<feature type="cross-link" description="Glycyl lysine isopeptide (Lys-Gly) (interchain with G-Cter in ubiquitin)" evidence="4">
    <location>
        <position position="121"/>
    </location>
</feature>
<feature type="cross-link" description="Glycyl lysine isopeptide (Lys-Gly) (interchain with G-Cter in ubiquitin)" evidence="4">
    <location>
        <position position="124"/>
    </location>
</feature>
<feature type="cross-link" description="Glycyl lysine isopeptide (Lys-Gly) (interchain with G-Cter in ubiquitin)" evidence="1">
    <location>
        <position position="172"/>
    </location>
</feature>
<feature type="cross-link" description="Glycyl lysine isopeptide (Lys-Gly) (interchain with G-Cter in ubiquitin); alternate" evidence="4">
    <location>
        <position position="277"/>
    </location>
</feature>
<feature type="cross-link" description="Glycyl lysine isopeptide (Lys-Gly) (interchain with G-Cter in ubiquitin)" evidence="4">
    <location>
        <position position="285"/>
    </location>
</feature>
<feature type="splice variant" id="VSP_005077" description="In isoform 1." evidence="10">
    <original>MATHGQTCARP</original>
    <variation>MSWCNELRLPALKQHSIGRGLESHIT</variation>
    <location>
        <begin position="1"/>
        <end position="11"/>
    </location>
</feature>
<feature type="splice variant" id="VSP_005076" description="In isoform 2." evidence="10 12">
    <location>
        <begin position="1"/>
        <end position="11"/>
    </location>
</feature>
<feature type="sequence variant" id="VAR_006380" evidence="9">
    <original>A</original>
    <variation>V</variation>
    <location>
        <position position="24"/>
    </location>
</feature>
<feature type="mutagenesis site" description="Abolishes ceramide and phosphatidylcholine binding. Decreases apoptosis frequency following mitochondrial targeting of ceramide." evidence="6">
    <original>E</original>
    <variation>Q</variation>
    <location>
        <position position="84"/>
    </location>
</feature>
<keyword id="KW-0002">3D-structure</keyword>
<keyword id="KW-0007">Acetylation</keyword>
<keyword id="KW-0025">Alternative splicing</keyword>
<keyword id="KW-0067">ATP-binding</keyword>
<keyword id="KW-0903">Direct protein sequencing</keyword>
<keyword id="KW-0406">Ion transport</keyword>
<keyword id="KW-1017">Isopeptide bond</keyword>
<keyword id="KW-0445">Lipid transport</keyword>
<keyword id="KW-0446">Lipid-binding</keyword>
<keyword id="KW-0472">Membrane</keyword>
<keyword id="KW-0496">Mitochondrion</keyword>
<keyword id="KW-1000">Mitochondrion outer membrane</keyword>
<keyword id="KW-0520">NAD</keyword>
<keyword id="KW-0547">Nucleotide-binding</keyword>
<keyword id="KW-0597">Phosphoprotein</keyword>
<keyword id="KW-0626">Porin</keyword>
<keyword id="KW-1267">Proteomics identification</keyword>
<keyword id="KW-1185">Reference proteome</keyword>
<keyword id="KW-0812">Transmembrane</keyword>
<keyword id="KW-1134">Transmembrane beta strand</keyword>
<keyword id="KW-0813">Transport</keyword>
<keyword id="KW-0832">Ubl conjugation</keyword>
<sequence length="294" mass="31567">MATHGQTCARPMCIPPSYADLGKAARDIFNKGFGFGLVKLDVKTKSCSGVEFSTSGSSNTDTGKVTGTLETKYKWCEYGLTFTEKWNTDNTLGTEIAIEDQICQGLKLTFDTTFSPNTGKKSGKIKSSYKRECINLGCDVDFDFAGPAIHGSAVFGYEGWLAGYQMTFDSAKSKLTRNNFAVGYRTGDFQLHTNVNDGTEFGGSIYQKVCEDLDTSVNLAWTSGTNCTRFGIAAKYQLDPTASISAKVNNSSLIGVGYTQTLRPGVKLTLSALVDGKSINAGGHKVGLALELEA</sequence>
<gene>
    <name evidence="15" type="primary">VDAC2</name>
</gene>
<name>VDAC2_HUMAN</name>
<comment type="function">
    <text evidence="6 9">Non-selective voltage-gated ion channel that mediates the transport of anions and cations through the mitochondrion outer membrane and plasma membrane (PubMed:8420959). The channel adopts an open conformation at zero mV and a closed conformation at both positive and negative potentials (PubMed:8420959). There are two populations of channels; the main that functions in a lower open-state conductance with lower ion selectivity, that switch, in a voltage-dependent manner, from the open to a low-conducting 'closed' state and the other that has a normal ion selectivity in the typical high conductance, 'open' state (PubMed:8420959). Binds various lipids, including the sphingolipid ceramide, the phospholipid phosphatidylcholine, and the sterols cholesterol and oxysterol (PubMed:31015432). Binding of ceramide promotes the mitochondrial outer membrane permeabilization (MOMP) apoptotic pathway (PubMed:31015432).</text>
</comment>
<comment type="function">
    <text evidence="7">Catalyzes the scrambling of phospholipids across the outer mitochondrial membrane; the mechanism is unrelated to channel activity and is capable of translocating both anionic and zwitterionic phospholipids.</text>
</comment>
<comment type="catalytic activity">
    <reaction evidence="9">
        <text>chloride(in) = chloride(out)</text>
        <dbReference type="Rhea" id="RHEA:29823"/>
        <dbReference type="ChEBI" id="CHEBI:17996"/>
    </reaction>
</comment>
<comment type="catalytic activity">
    <reaction evidence="9">
        <text>K(+)(in) = K(+)(out)</text>
        <dbReference type="Rhea" id="RHEA:29463"/>
        <dbReference type="ChEBI" id="CHEBI:29103"/>
    </reaction>
</comment>
<comment type="catalytic activity">
    <reaction evidence="14">
        <text>a 1,2-diacyl-sn-glycero-3-phospho-L-serine(in) = a 1,2-diacyl-sn-glycero-3-phospho-L-serine(out)</text>
        <dbReference type="Rhea" id="RHEA:38663"/>
        <dbReference type="ChEBI" id="CHEBI:57262"/>
    </reaction>
</comment>
<comment type="catalytic activity">
    <reaction evidence="7">
        <text>a 1,2-diacyl-sn-glycero-3-phosphocholine(in) = a 1,2-diacyl-sn-glycero-3-phosphocholine(out)</text>
        <dbReference type="Rhea" id="RHEA:38571"/>
        <dbReference type="ChEBI" id="CHEBI:57643"/>
    </reaction>
</comment>
<comment type="catalytic activity">
    <reaction evidence="7">
        <text>a 1,2-diacyl-sn-glycero-3-phospho-(1D-myo-inositol)(in) = a 1,2-diacyl-sn-glycero-3-phospho-(1D-myo-inositol)(out)</text>
        <dbReference type="Rhea" id="RHEA:38691"/>
        <dbReference type="ChEBI" id="CHEBI:57880"/>
    </reaction>
</comment>
<comment type="subunit">
    <text evidence="2 7">Monomer, homodimer and higher order oligomers; formation of higher order structures is necessary for scramblase activity (PubMed:38065946). Interacts with ARMC12 in a TBC1D21-dependent manner (By similarity). Interacts with KLC3 (By similarity). Interacts with SPATA33 (By similarity). Interacts with PPP3CC in a SPATA33-dependent manner (By similarity).</text>
</comment>
<comment type="interaction">
    <interactant intactId="EBI-354022">
        <id>P45880</id>
    </interactant>
    <interactant intactId="EBI-10232010">
        <id>Q6NUP5</id>
        <label>AGTR1</label>
    </interactant>
    <organismsDiffer>false</organismsDiffer>
    <experiments>3</experiments>
</comment>
<comment type="interaction">
    <interactant intactId="EBI-354022">
        <id>P45880</id>
    </interactant>
    <interactant intactId="EBI-21535880">
        <id>Q92870-2</id>
        <label>APBB2</label>
    </interactant>
    <organismsDiffer>false</organismsDiffer>
    <experiments>3</experiments>
</comment>
<comment type="interaction">
    <interactant intactId="EBI-354022">
        <id>P45880</id>
    </interactant>
    <interactant intactId="EBI-21499901">
        <id>P42331-2</id>
        <label>ARHGAP25</label>
    </interactant>
    <organismsDiffer>false</organismsDiffer>
    <experiments>3</experiments>
</comment>
<comment type="interaction">
    <interactant intactId="EBI-354022">
        <id>P45880</id>
    </interactant>
    <interactant intactId="EBI-10988864">
        <id>P46379-2</id>
        <label>BAG6</label>
    </interactant>
    <organismsDiffer>false</organismsDiffer>
    <experiments>3</experiments>
</comment>
<comment type="interaction">
    <interactant intactId="EBI-354022">
        <id>P45880</id>
    </interactant>
    <interactant intactId="EBI-2837444">
        <id>Q8WUW1</id>
        <label>BRK1</label>
    </interactant>
    <organismsDiffer>false</organismsDiffer>
    <experiments>3</experiments>
</comment>
<comment type="interaction">
    <interactant intactId="EBI-354022">
        <id>P45880</id>
    </interactant>
    <interactant intactId="EBI-355710">
        <id>P48643</id>
        <label>CCT5</label>
    </interactant>
    <organismsDiffer>false</organismsDiffer>
    <experiments>3</experiments>
</comment>
<comment type="interaction">
    <interactant intactId="EBI-354022">
        <id>P45880</id>
    </interactant>
    <interactant intactId="EBI-349854">
        <id>P13569</id>
        <label>CFTR</label>
    </interactant>
    <organismsDiffer>false</organismsDiffer>
    <experiments>10</experiments>
</comment>
<comment type="interaction">
    <interactant intactId="EBI-354022">
        <id>P45880</id>
    </interactant>
    <interactant intactId="EBI-2115097">
        <id>P07339</id>
        <label>CTSD</label>
    </interactant>
    <organismsDiffer>false</organismsDiffer>
    <experiments>3</experiments>
</comment>
<comment type="interaction">
    <interactant intactId="EBI-354022">
        <id>P45880</id>
    </interactant>
    <interactant intactId="EBI-5280572">
        <id>P29692-2</id>
        <label>EEF1D</label>
    </interactant>
    <organismsDiffer>false</organismsDiffer>
    <experiments>3</experiments>
</comment>
<comment type="interaction">
    <interactant intactId="EBI-354022">
        <id>P45880</id>
    </interactant>
    <interactant intactId="EBI-6123466">
        <id>Q96A26</id>
        <label>FAM162A</label>
    </interactant>
    <organismsDiffer>false</organismsDiffer>
    <experiments>2</experiments>
</comment>
<comment type="interaction">
    <interactant intactId="EBI-354022">
        <id>P45880</id>
    </interactant>
    <interactant intactId="EBI-25856644">
        <id>Q06787-7</id>
        <label>FMR1</label>
    </interactant>
    <organismsDiffer>false</organismsDiffer>
    <experiments>3</experiments>
</comment>
<comment type="interaction">
    <interactant intactId="EBI-354022">
        <id>P45880</id>
    </interactant>
    <interactant intactId="EBI-747754">
        <id>P28799</id>
        <label>GRN</label>
    </interactant>
    <organismsDiffer>false</organismsDiffer>
    <experiments>3</experiments>
</comment>
<comment type="interaction">
    <interactant intactId="EBI-354022">
        <id>P45880</id>
    </interactant>
    <interactant intactId="EBI-352682">
        <id>P04792</id>
        <label>HSPB1</label>
    </interactant>
    <organismsDiffer>false</organismsDiffer>
    <experiments>3</experiments>
</comment>
<comment type="interaction">
    <interactant intactId="EBI-354022">
        <id>P45880</id>
    </interactant>
    <interactant intactId="EBI-466029">
        <id>P42858</id>
        <label>HTT</label>
    </interactant>
    <organismsDiffer>false</organismsDiffer>
    <experiments>22</experiments>
</comment>
<comment type="interaction">
    <interactant intactId="EBI-354022">
        <id>P45880</id>
    </interactant>
    <interactant intactId="EBI-6398041">
        <id>Q9UMF0</id>
        <label>ICAM5</label>
    </interactant>
    <organismsDiffer>false</organismsDiffer>
    <experiments>3</experiments>
</comment>
<comment type="interaction">
    <interactant intactId="EBI-354022">
        <id>P45880</id>
    </interactant>
    <interactant intactId="EBI-10975473">
        <id>O60333-2</id>
        <label>KIF1B</label>
    </interactant>
    <organismsDiffer>false</organismsDiffer>
    <experiments>3</experiments>
</comment>
<comment type="interaction">
    <interactant intactId="EBI-354022">
        <id>P45880</id>
    </interactant>
    <interactant intactId="EBI-948266">
        <id>O14901</id>
        <label>KLF11</label>
    </interactant>
    <organismsDiffer>false</organismsDiffer>
    <experiments>3</experiments>
</comment>
<comment type="interaction">
    <interactant intactId="EBI-354022">
        <id>P45880</id>
    </interactant>
    <interactant intactId="EBI-748312">
        <id>P49821</id>
        <label>NDUFV1</label>
    </interactant>
    <organismsDiffer>false</organismsDiffer>
    <experiments>3</experiments>
</comment>
<comment type="interaction">
    <interactant intactId="EBI-354022">
        <id>P45880</id>
    </interactant>
    <interactant intactId="EBI-475646">
        <id>P07196</id>
        <label>NEFL</label>
    </interactant>
    <organismsDiffer>false</organismsDiffer>
    <experiments>3</experiments>
</comment>
<comment type="interaction">
    <interactant intactId="EBI-354022">
        <id>P45880</id>
    </interactant>
    <interactant intactId="EBI-988601">
        <id>O43933</id>
        <label>PEX1</label>
    </interactant>
    <organismsDiffer>false</organismsDiffer>
    <experiments>3</experiments>
</comment>
<comment type="interaction">
    <interactant intactId="EBI-354022">
        <id>P45880</id>
    </interactant>
    <interactant intactId="EBI-50433196">
        <id>A0A6Q8PF08</id>
        <label>PMP22</label>
    </interactant>
    <organismsDiffer>false</organismsDiffer>
    <experiments>3</experiments>
</comment>
<comment type="interaction">
    <interactant intactId="EBI-354022">
        <id>P45880</id>
    </interactant>
    <interactant intactId="EBI-21251460">
        <id>O60260-5</id>
        <label>PRKN</label>
    </interactant>
    <organismsDiffer>false</organismsDiffer>
    <experiments>6</experiments>
</comment>
<comment type="interaction">
    <interactant intactId="EBI-354022">
        <id>P45880</id>
    </interactant>
    <interactant intactId="EBI-749195">
        <id>P60891</id>
        <label>PRPS1</label>
    </interactant>
    <organismsDiffer>false</organismsDiffer>
    <experiments>3</experiments>
</comment>
<comment type="interaction">
    <interactant intactId="EBI-354022">
        <id>P45880</id>
    </interactant>
    <interactant intactId="EBI-396669">
        <id>Q9Y3C5</id>
        <label>RNF11</label>
    </interactant>
    <organismsDiffer>false</organismsDiffer>
    <experiments>3</experiments>
</comment>
<comment type="interaction">
    <interactant intactId="EBI-354022">
        <id>P45880</id>
    </interactant>
    <interactant intactId="EBI-3927802">
        <id>O94811</id>
        <label>TPPP</label>
    </interactant>
    <organismsDiffer>false</organismsDiffer>
    <experiments>3</experiments>
</comment>
<comment type="interaction">
    <interactant intactId="EBI-354022">
        <id>P45880</id>
    </interactant>
    <interactant intactId="EBI-711909">
        <id>P02766</id>
        <label>TTR</label>
    </interactant>
    <organismsDiffer>false</organismsDiffer>
    <experiments>3</experiments>
</comment>
<comment type="interaction">
    <interactant intactId="EBI-354022">
        <id>P45880</id>
    </interactant>
    <interactant intactId="EBI-354158">
        <id>P21796</id>
        <label>VDAC1</label>
    </interactant>
    <organismsDiffer>false</organismsDiffer>
    <experiments>6</experiments>
</comment>
<comment type="interaction">
    <interactant intactId="EBI-354022">
        <id>P45880</id>
    </interactant>
    <interactant intactId="EBI-354196">
        <id>Q9Y277</id>
        <label>VDAC3</label>
    </interactant>
    <organismsDiffer>false</organismsDiffer>
    <experiments>2</experiments>
</comment>
<comment type="interaction">
    <interactant intactId="EBI-354022">
        <id>P45880</id>
    </interactant>
    <interactant intactId="EBI-720609">
        <id>O76024</id>
        <label>WFS1</label>
    </interactant>
    <organismsDiffer>false</organismsDiffer>
    <experiments>3</experiments>
</comment>
<comment type="interaction">
    <interactant intactId="EBI-11614013">
        <id>P45880-3</id>
    </interactant>
    <interactant intactId="EBI-1755919">
        <id>Q05996</id>
        <label>ZP2</label>
    </interactant>
    <organismsDiffer>false</organismsDiffer>
    <experiments>2</experiments>
</comment>
<comment type="interaction">
    <interactant intactId="EBI-11614013">
        <id>P45880-3</id>
    </interactant>
    <interactant intactId="EBI-11783624">
        <id>P21754</id>
        <label>ZP3</label>
    </interactant>
    <organismsDiffer>false</organismsDiffer>
    <experiments>2</experiments>
</comment>
<comment type="subcellular location">
    <subcellularLocation>
        <location evidence="6 8">Mitochondrion outer membrane</location>
    </subcellularLocation>
    <subcellularLocation>
        <location evidence="5">Membrane</location>
    </subcellularLocation>
    <text evidence="5">May localize to non-mitochondrial membranes.</text>
</comment>
<comment type="alternative products">
    <event type="alternative splicing"/>
    <isoform>
        <id>P45880-3</id>
        <name>3</name>
        <sequence type="displayed"/>
    </isoform>
    <isoform>
        <id>P45880-1</id>
        <name>1</name>
        <sequence type="described" ref="VSP_005077"/>
    </isoform>
    <isoform>
        <id>P45880-2</id>
        <name>2</name>
        <sequence type="described" ref="VSP_005076"/>
    </isoform>
</comment>
<comment type="tissue specificity">
    <text evidence="5 9">Expressed in erythrocytes (at protein level) (PubMed:27641616). Expressed in all tissues examined (PubMed:8420959).</text>
</comment>
<comment type="domain">
    <text evidence="1">Consists mainly of a membrane-spanning beta-barrel formed by 19 beta-strands.</text>
</comment>
<comment type="PTM">
    <text evidence="4">Ubiquitinated by PRKN during mitophagy, leading to its degradation and enhancement of mitophagy. Deubiquitinated by USP30.</text>
</comment>
<comment type="similarity">
    <text evidence="13">Belongs to the eukaryotic mitochondrial porin family.</text>
</comment>
<comment type="sequence caution" evidence="13">
    <molecule>Isoform 1</molecule>
    <conflict type="frameshift">
        <sequence resource="EMBL-CDS" id="AAA60144"/>
    </conflict>
</comment>
<comment type="sequence caution" evidence="13">
    <molecule>Isoform 2</molecule>
    <conflict type="frameshift">
        <sequence resource="EMBL-CDS" id="AAA60145"/>
    </conflict>
</comment>
<proteinExistence type="evidence at protein level"/>
<organism>
    <name type="scientific">Homo sapiens</name>
    <name type="common">Human</name>
    <dbReference type="NCBI Taxonomy" id="9606"/>
    <lineage>
        <taxon>Eukaryota</taxon>
        <taxon>Metazoa</taxon>
        <taxon>Chordata</taxon>
        <taxon>Craniata</taxon>
        <taxon>Vertebrata</taxon>
        <taxon>Euteleostomi</taxon>
        <taxon>Mammalia</taxon>
        <taxon>Eutheria</taxon>
        <taxon>Euarchontoglires</taxon>
        <taxon>Primates</taxon>
        <taxon>Haplorrhini</taxon>
        <taxon>Catarrhini</taxon>
        <taxon>Hominidae</taxon>
        <taxon>Homo</taxon>
    </lineage>
</organism>
<protein>
    <recommendedName>
        <fullName evidence="13">Non-selective voltage-gated ion channel VDAC2</fullName>
        <shortName>VDAC-2</shortName>
        <shortName evidence="11">hVDAC2</shortName>
    </recommendedName>
    <alternativeName>
        <fullName>Outer mitochondrial membrane protein porin 2</fullName>
    </alternativeName>
</protein>